<sequence length="1077" mass="119624">MEPFVVKENIIASASSPMKKRRIDHTESADGSAINASNSSSIGLNNSIGGNDTVMSMAEFGNDNSNNQEIDEDLHSRQLAVYGRETMRKLFASNVLISGMQGLGVEIAKNIILAGVKSVTLHDENVVELWDLSSNFVFTEEDIGKNRALASVHKLQELNNAVAVSTLTGKLTKEQLSDFQVVVFVDISFEKATEIDDYCHSHQPPIAFIKADVRGLFGSLFCDFGPHFTVLDVDGEEPHSGIIASVSNENPGFVSCVDDERLEFEDGNLVVFSEVEGMTELNDGKPRKIKNVKPFSFTLEEDTSSYGQYMKGGIVTQVKQPKVLNFKPLREALKDPGDFLLSDFSKFDRPPLLHLAFQALDRFSSQAGRFPFAGSEEDAQKLVEIAVDINEGLGDARLEDVNSKLLRHLAFGSRAVLNPMAAMFGGIVGQEVVKACSGKFHPIFQFFYFDSVESLPKEPLDASEFRPQNSRYDAQISVFGSTLQKKLEDARVFVVGAGALGCEFLKNLALMGVSCGTQGKLTVTDDDVIEKSNLSRQFLFRDWNIGQAKSTVAATAAAGINSRLNIDALQNRVGPETENVFDDSFWENLTVVVNALDNVTARLYVDSRCVYFQKPLLESGTLGAKCNTQMVIPHLTENYGASRDPPEKQAPMCTVHSFPHNIDHCLTWARSEFEGLLEKTPAEVNAYLSDPVEYMKAMRTAGDAQARDTLGRVVECLEKEKCNSFQDCITWARLRFEDYFANRVKQLCYTFPEDAATSTGAPFWSAPKRFPRPLQFSSTDLSHINFVMAASILRAETFGIPTPEWAKTRAGLAEAVERVIVPDFEPKKDATIVTDEKATTLSTASVDDAAVIDELNAKLVRCRMSLQPEFRMKAIQFEKDDDTNYHMDMIAGLANMRARNYSVPEVDKLKAKFIAGRIIPAIATSTAMATGFVCLEMYKVLDGSHKVEDYRNTFANLALPLFSMAEPVPPKVVKHQDQSWTVWDRWVMRGNPTLRELLDWLKEKGLNAYSISCGSSLLYNSMFSRHKERMNRRVVDLARDVAGVELPAYRRHVDVVVACEDDNDADVDIPLVSVYFA</sequence>
<dbReference type="EC" id="6.2.1.45" evidence="6"/>
<dbReference type="EMBL" id="U40566">
    <property type="protein sequence ID" value="AAB37569.1"/>
    <property type="molecule type" value="Genomic_DNA"/>
</dbReference>
<dbReference type="EMBL" id="AB006700">
    <property type="protein sequence ID" value="BAB08968.1"/>
    <property type="molecule type" value="Genomic_DNA"/>
</dbReference>
<dbReference type="EMBL" id="CP002688">
    <property type="protein sequence ID" value="AED91020.1"/>
    <property type="molecule type" value="Genomic_DNA"/>
</dbReference>
<dbReference type="SMR" id="P92974"/>
<dbReference type="BioGRID" id="15813">
    <property type="interactions" value="31"/>
</dbReference>
<dbReference type="FunCoup" id="P92974">
    <property type="interactions" value="4401"/>
</dbReference>
<dbReference type="IntAct" id="P92974">
    <property type="interactions" value="1"/>
</dbReference>
<dbReference type="STRING" id="3702.P92974"/>
<dbReference type="iPTMnet" id="P92974"/>
<dbReference type="PaxDb" id="3702-AT5G06460.1"/>
<dbReference type="ProteomicsDB" id="228718"/>
<dbReference type="EnsemblPlants" id="AT5G06460.1">
    <property type="protein sequence ID" value="AT5G06460.1"/>
    <property type="gene ID" value="AT5G06460"/>
</dbReference>
<dbReference type="GeneID" id="830534"/>
<dbReference type="Gramene" id="AT5G06460.1">
    <property type="protein sequence ID" value="AT5G06460.1"/>
    <property type="gene ID" value="AT5G06460"/>
</dbReference>
<dbReference type="KEGG" id="ath:AT5G06460"/>
<dbReference type="Araport" id="AT5G06460"/>
<dbReference type="TAIR" id="AT5G06460">
    <property type="gene designation" value="UBA 2"/>
</dbReference>
<dbReference type="eggNOG" id="KOG2012">
    <property type="taxonomic scope" value="Eukaryota"/>
</dbReference>
<dbReference type="HOGENOM" id="CLU_002556_0_0_1"/>
<dbReference type="InParanoid" id="P92974"/>
<dbReference type="OMA" id="WVKSPSK"/>
<dbReference type="OrthoDB" id="10252231at2759"/>
<dbReference type="PhylomeDB" id="P92974"/>
<dbReference type="BRENDA" id="2.3.2.23">
    <property type="organism ID" value="399"/>
</dbReference>
<dbReference type="BRENDA" id="6.2.1.45">
    <property type="organism ID" value="399"/>
</dbReference>
<dbReference type="UniPathway" id="UPA00143"/>
<dbReference type="PRO" id="PR:P92974"/>
<dbReference type="Proteomes" id="UP000006548">
    <property type="component" value="Chromosome 5"/>
</dbReference>
<dbReference type="ExpressionAtlas" id="P92974">
    <property type="expression patterns" value="baseline and differential"/>
</dbReference>
<dbReference type="GO" id="GO:0005634">
    <property type="term" value="C:nucleus"/>
    <property type="evidence" value="ECO:0000304"/>
    <property type="project" value="TAIR"/>
</dbReference>
<dbReference type="GO" id="GO:0005524">
    <property type="term" value="F:ATP binding"/>
    <property type="evidence" value="ECO:0007669"/>
    <property type="project" value="UniProtKB-KW"/>
</dbReference>
<dbReference type="GO" id="GO:0004839">
    <property type="term" value="F:ubiquitin activating enzyme activity"/>
    <property type="evidence" value="ECO:0007669"/>
    <property type="project" value="UniProtKB-EC"/>
</dbReference>
<dbReference type="GO" id="GO:0004842">
    <property type="term" value="F:ubiquitin-protein transferase activity"/>
    <property type="evidence" value="ECO:0000314"/>
    <property type="project" value="TAIR"/>
</dbReference>
<dbReference type="GO" id="GO:0016567">
    <property type="term" value="P:protein ubiquitination"/>
    <property type="evidence" value="ECO:0000314"/>
    <property type="project" value="TAIR"/>
</dbReference>
<dbReference type="CDD" id="cd01491">
    <property type="entry name" value="Ube1_repeat1"/>
    <property type="match status" value="1"/>
</dbReference>
<dbReference type="CDD" id="cd01490">
    <property type="entry name" value="Ube1_repeat2"/>
    <property type="match status" value="1"/>
</dbReference>
<dbReference type="FunFam" id="3.40.50.12550:FF:000001">
    <property type="entry name" value="Ubiquitin-activating enzyme E1 1"/>
    <property type="match status" value="1"/>
</dbReference>
<dbReference type="FunFam" id="3.40.50.720:FF:000015">
    <property type="entry name" value="Ubiquitin-activating enzyme E1 1"/>
    <property type="match status" value="1"/>
</dbReference>
<dbReference type="FunFam" id="1.10.10.2660:FF:000002">
    <property type="entry name" value="Ubiquitin-activating enzyme E1 2"/>
    <property type="match status" value="1"/>
</dbReference>
<dbReference type="FunFam" id="3.10.290.60:FF:000001">
    <property type="entry name" value="Ubiquitin-activating enzyme E1 2"/>
    <property type="match status" value="1"/>
</dbReference>
<dbReference type="FunFam" id="3.50.50.80:FF:000003">
    <property type="entry name" value="Ubiquitin-activating enzyme E1 2"/>
    <property type="match status" value="1"/>
</dbReference>
<dbReference type="FunFam" id="2.40.30.180:FF:000001">
    <property type="entry name" value="ubiquitin-like modifier-activating enzyme 1"/>
    <property type="match status" value="1"/>
</dbReference>
<dbReference type="Gene3D" id="3.40.50.720">
    <property type="entry name" value="NAD(P)-binding Rossmann-like Domain"/>
    <property type="match status" value="1"/>
</dbReference>
<dbReference type="Gene3D" id="2.40.30.180">
    <property type="entry name" value="Ubiquitin-activating enzyme E1, FCCH domain"/>
    <property type="match status" value="1"/>
</dbReference>
<dbReference type="Gene3D" id="3.50.50.80">
    <property type="entry name" value="Ubiquitin-activating enzyme E1, inactive adenylation domain, subdomain 1"/>
    <property type="match status" value="1"/>
</dbReference>
<dbReference type="Gene3D" id="3.40.50.12550">
    <property type="entry name" value="Ubiquitin-activating enzyme E1, inactive adenylation domain, subdomain 2"/>
    <property type="match status" value="1"/>
</dbReference>
<dbReference type="Gene3D" id="1.10.10.2660">
    <property type="entry name" value="Ubiquitin-activating enzyme E1, SCCH domain"/>
    <property type="match status" value="1"/>
</dbReference>
<dbReference type="Gene3D" id="3.10.290.60">
    <property type="entry name" value="Ubiquitin-activating enzyme E1, UFD domain"/>
    <property type="match status" value="1"/>
</dbReference>
<dbReference type="InterPro" id="IPR032420">
    <property type="entry name" value="E1_4HB"/>
</dbReference>
<dbReference type="InterPro" id="IPR032418">
    <property type="entry name" value="E1_FCCH"/>
</dbReference>
<dbReference type="InterPro" id="IPR042302">
    <property type="entry name" value="E1_FCCH_sf"/>
</dbReference>
<dbReference type="InterPro" id="IPR045886">
    <property type="entry name" value="ThiF/MoeB/HesA"/>
</dbReference>
<dbReference type="InterPro" id="IPR000594">
    <property type="entry name" value="ThiF_NAD_FAD-bd"/>
</dbReference>
<dbReference type="InterPro" id="IPR018965">
    <property type="entry name" value="Ub-activating_enz_E1_C"/>
</dbReference>
<dbReference type="InterPro" id="IPR042449">
    <property type="entry name" value="Ub-E1_IAD_1"/>
</dbReference>
<dbReference type="InterPro" id="IPR038252">
    <property type="entry name" value="UBA_E1_C_sf"/>
</dbReference>
<dbReference type="InterPro" id="IPR019572">
    <property type="entry name" value="UBA_E1_SCCH"/>
</dbReference>
<dbReference type="InterPro" id="IPR042063">
    <property type="entry name" value="Ubi_acti_E1_SCCH"/>
</dbReference>
<dbReference type="InterPro" id="IPR035985">
    <property type="entry name" value="Ubiquitin-activating_enz"/>
</dbReference>
<dbReference type="InterPro" id="IPR018075">
    <property type="entry name" value="UBQ-activ_enz_E1"/>
</dbReference>
<dbReference type="InterPro" id="IPR018074">
    <property type="entry name" value="UBQ-activ_enz_E1_CS"/>
</dbReference>
<dbReference type="InterPro" id="IPR033127">
    <property type="entry name" value="UBQ-activ_enz_E1_Cys_AS"/>
</dbReference>
<dbReference type="InterPro" id="IPR000011">
    <property type="entry name" value="UBQ/SUMO-activ_enz_E1-like"/>
</dbReference>
<dbReference type="NCBIfam" id="TIGR01408">
    <property type="entry name" value="Ube1"/>
    <property type="match status" value="1"/>
</dbReference>
<dbReference type="PANTHER" id="PTHR10953:SF162">
    <property type="entry name" value="SUMO-ACTIVATING ENZYME SUBUNIT 1"/>
    <property type="match status" value="1"/>
</dbReference>
<dbReference type="PANTHER" id="PTHR10953">
    <property type="entry name" value="UBIQUITIN-ACTIVATING ENZYME E1"/>
    <property type="match status" value="1"/>
</dbReference>
<dbReference type="Pfam" id="PF16191">
    <property type="entry name" value="E1_4HB"/>
    <property type="match status" value="1"/>
</dbReference>
<dbReference type="Pfam" id="PF16190">
    <property type="entry name" value="E1_FCCH"/>
    <property type="match status" value="1"/>
</dbReference>
<dbReference type="Pfam" id="PF09358">
    <property type="entry name" value="E1_UFD"/>
    <property type="match status" value="1"/>
</dbReference>
<dbReference type="Pfam" id="PF00899">
    <property type="entry name" value="ThiF"/>
    <property type="match status" value="2"/>
</dbReference>
<dbReference type="Pfam" id="PF10585">
    <property type="entry name" value="UBA_E1_SCCH"/>
    <property type="match status" value="1"/>
</dbReference>
<dbReference type="PRINTS" id="PR01849">
    <property type="entry name" value="UBIQUITINACT"/>
</dbReference>
<dbReference type="SMART" id="SM00985">
    <property type="entry name" value="UBA_e1_C"/>
    <property type="match status" value="1"/>
</dbReference>
<dbReference type="SUPFAM" id="SSF69572">
    <property type="entry name" value="Activating enzymes of the ubiquitin-like proteins"/>
    <property type="match status" value="2"/>
</dbReference>
<dbReference type="PROSITE" id="PS00536">
    <property type="entry name" value="UBIQUITIN_ACTIVAT_1"/>
    <property type="match status" value="1"/>
</dbReference>
<dbReference type="PROSITE" id="PS00865">
    <property type="entry name" value="UBIQUITIN_ACTIVAT_2"/>
    <property type="match status" value="1"/>
</dbReference>
<organism>
    <name type="scientific">Arabidopsis thaliana</name>
    <name type="common">Mouse-ear cress</name>
    <dbReference type="NCBI Taxonomy" id="3702"/>
    <lineage>
        <taxon>Eukaryota</taxon>
        <taxon>Viridiplantae</taxon>
        <taxon>Streptophyta</taxon>
        <taxon>Embryophyta</taxon>
        <taxon>Tracheophyta</taxon>
        <taxon>Spermatophyta</taxon>
        <taxon>Magnoliopsida</taxon>
        <taxon>eudicotyledons</taxon>
        <taxon>Gunneridae</taxon>
        <taxon>Pentapetalae</taxon>
        <taxon>rosids</taxon>
        <taxon>malvids</taxon>
        <taxon>Brassicales</taxon>
        <taxon>Brassicaceae</taxon>
        <taxon>Camelineae</taxon>
        <taxon>Arabidopsis</taxon>
    </lineage>
</organism>
<protein>
    <recommendedName>
        <fullName>Ubiquitin-activating enzyme E1 2</fullName>
        <shortName evidence="7">AtUBA2</shortName>
        <ecNumber evidence="6">6.2.1.45</ecNumber>
    </recommendedName>
</protein>
<comment type="function">
    <text evidence="6">Activates ubiquitin by first adenylating its C-terminal glycine residue with ATP, and thereafter linking this residue to the side chain of a cysteine residue in E1, yielding a ubiquitin-E1 thioester and free AMP.</text>
</comment>
<comment type="catalytic activity">
    <reaction evidence="6">
        <text>ATP + ubiquitin + [E1 ubiquitin-activating enzyme]-L-cysteine = AMP + diphosphate + S-ubiquitinyl-[E1 ubiquitin-activating enzyme]-L-cysteine.</text>
        <dbReference type="EC" id="6.2.1.45"/>
    </reaction>
</comment>
<comment type="pathway">
    <text evidence="6">Protein modification; protein ubiquitination.</text>
</comment>
<comment type="subunit">
    <text evidence="1">Monomer.</text>
</comment>
<comment type="tissue specificity">
    <text evidence="6">Expressed in leaves, flowers, roots and stems. Detected in germinating seeds, cotyledons, hypocotyls, vascular tissues, anthers, filaments, pollen, style, stigma, sepals, petals, ovary, developing ovules, funiculi and silique walls.</text>
</comment>
<comment type="developmental stage">
    <text evidence="6">Expressed over the entire range of development.</text>
</comment>
<comment type="disruption phenotype">
    <text evidence="5">No visible phenotype and no changes in disease susceptibility.</text>
</comment>
<comment type="miscellaneous">
    <text evidence="6">Both UBA1 and UBA2 are able to activate ubiquitin and transfer it to the E2s with equal efficiency.</text>
</comment>
<comment type="similarity">
    <text evidence="8">Belongs to the ubiquitin-activating E1 family.</text>
</comment>
<evidence type="ECO:0000250" key="1"/>
<evidence type="ECO:0000250" key="2">
    <source>
        <dbReference type="UniProtKB" id="P22515"/>
    </source>
</evidence>
<evidence type="ECO:0000255" key="3">
    <source>
        <dbReference type="PROSITE-ProRule" id="PRU10132"/>
    </source>
</evidence>
<evidence type="ECO:0000256" key="4">
    <source>
        <dbReference type="SAM" id="MobiDB-lite"/>
    </source>
</evidence>
<evidence type="ECO:0000269" key="5">
    <source>
    </source>
</evidence>
<evidence type="ECO:0000269" key="6">
    <source>
    </source>
</evidence>
<evidence type="ECO:0000303" key="7">
    <source>
    </source>
</evidence>
<evidence type="ECO:0000305" key="8"/>
<proteinExistence type="evidence at protein level"/>
<feature type="chain" id="PRO_0000399396" description="Ubiquitin-activating enzyme E1 2">
    <location>
        <begin position="1"/>
        <end position="1077"/>
    </location>
</feature>
<feature type="region of interest" description="Disordered" evidence="4">
    <location>
        <begin position="16"/>
        <end position="36"/>
    </location>
</feature>
<feature type="active site" description="Glycyl thioester intermediate" evidence="3">
    <location>
        <position position="653"/>
    </location>
</feature>
<feature type="binding site" evidence="2">
    <location>
        <position position="499"/>
    </location>
    <ligand>
        <name>ATP</name>
        <dbReference type="ChEBI" id="CHEBI:30616"/>
    </ligand>
</feature>
<feature type="binding site" evidence="2">
    <location>
        <position position="525"/>
    </location>
    <ligand>
        <name>ATP</name>
        <dbReference type="ChEBI" id="CHEBI:30616"/>
    </ligand>
</feature>
<feature type="binding site" evidence="2">
    <location>
        <position position="536"/>
    </location>
    <ligand>
        <name>ATP</name>
        <dbReference type="ChEBI" id="CHEBI:30616"/>
    </ligand>
</feature>
<feature type="binding site" evidence="2">
    <location>
        <position position="549"/>
    </location>
    <ligand>
        <name>ATP</name>
        <dbReference type="ChEBI" id="CHEBI:30616"/>
    </ligand>
</feature>
<feature type="binding site" evidence="2">
    <location>
        <begin position="597"/>
        <end position="598"/>
    </location>
    <ligand>
        <name>ATP</name>
        <dbReference type="ChEBI" id="CHEBI:30616"/>
    </ligand>
</feature>
<keyword id="KW-0067">ATP-binding</keyword>
<keyword id="KW-0436">Ligase</keyword>
<keyword id="KW-0547">Nucleotide-binding</keyword>
<keyword id="KW-1185">Reference proteome</keyword>
<keyword id="KW-0833">Ubl conjugation pathway</keyword>
<reference key="1">
    <citation type="journal article" date="1997" name="Plant J.">
        <title>The ubiquitin-activating enzyme (E1) gene family in Arabidopsis thaliana.</title>
        <authorList>
            <person name="Hatfield P.M."/>
            <person name="Gosink M.M."/>
            <person name="Carpenter T.B."/>
            <person name="Vierstra R.D."/>
        </authorList>
    </citation>
    <scope>NUCLEOTIDE SEQUENCE [GENOMIC DNA]</scope>
    <scope>FUNCTION</scope>
    <scope>CATALYTIC ACTIVITY</scope>
    <scope>PATHWAY</scope>
    <scope>TISSUE SPECIFICITY</scope>
    <scope>DEVELOPMENTAL STAGE</scope>
    <source>
        <strain>cv. Columbia</strain>
    </source>
</reference>
<reference key="2">
    <citation type="journal article" date="1997" name="DNA Res.">
        <title>Structural analysis of Arabidopsis thaliana chromosome 5. II. Sequence features of the regions of 1,044,062 bp covered by thirteen physically assigned P1 clones.</title>
        <authorList>
            <person name="Kotani H."/>
            <person name="Nakamura Y."/>
            <person name="Sato S."/>
            <person name="Kaneko T."/>
            <person name="Asamizu E."/>
            <person name="Miyajima N."/>
            <person name="Tabata S."/>
        </authorList>
    </citation>
    <scope>NUCLEOTIDE SEQUENCE [LARGE SCALE GENOMIC DNA]</scope>
    <source>
        <strain>cv. Columbia</strain>
    </source>
</reference>
<reference key="3">
    <citation type="journal article" date="2017" name="Plant J.">
        <title>Araport11: a complete reannotation of the Arabidopsis thaliana reference genome.</title>
        <authorList>
            <person name="Cheng C.Y."/>
            <person name="Krishnakumar V."/>
            <person name="Chan A.P."/>
            <person name="Thibaud-Nissen F."/>
            <person name="Schobel S."/>
            <person name="Town C.D."/>
        </authorList>
    </citation>
    <scope>GENOME REANNOTATION</scope>
    <source>
        <strain>cv. Columbia</strain>
    </source>
</reference>
<reference key="4">
    <citation type="journal article" date="2007" name="Plant J.">
        <title>The ubiquitin pathway is required for innate immunity in Arabidopsis.</title>
        <authorList>
            <person name="Goritschnig S."/>
            <person name="Zhang Y."/>
            <person name="Li X."/>
        </authorList>
    </citation>
    <scope>DISRUPTION PHENOTYPE</scope>
</reference>
<reference key="5">
    <citation type="journal article" date="2009" name="J. Proteomics">
        <title>Phosphoproteomic analysis of nuclei-enriched fractions from Arabidopsis thaliana.</title>
        <authorList>
            <person name="Jones A.M.E."/>
            <person name="MacLean D."/>
            <person name="Studholme D.J."/>
            <person name="Serna-Sanz A."/>
            <person name="Andreasson E."/>
            <person name="Rathjen J.P."/>
            <person name="Peck S.C."/>
        </authorList>
    </citation>
    <scope>IDENTIFICATION BY MASS SPECTROMETRY [LARGE SCALE ANALYSIS]</scope>
    <source>
        <strain>cv. Columbia</strain>
    </source>
</reference>
<reference key="6">
    <citation type="journal article" date="2009" name="Plant Physiol.">
        <title>Large-scale Arabidopsis phosphoproteome profiling reveals novel chloroplast kinase substrates and phosphorylation networks.</title>
        <authorList>
            <person name="Reiland S."/>
            <person name="Messerli G."/>
            <person name="Baerenfaller K."/>
            <person name="Gerrits B."/>
            <person name="Endler A."/>
            <person name="Grossmann J."/>
            <person name="Gruissem W."/>
            <person name="Baginsky S."/>
        </authorList>
    </citation>
    <scope>IDENTIFICATION BY MASS SPECTROMETRY [LARGE SCALE ANALYSIS]</scope>
</reference>
<accession>P92974</accession>
<gene>
    <name type="primary">UBA2</name>
    <name type="ordered locus">At5g06460</name>
    <name type="ORF">MHF15.2</name>
</gene>
<name>UBE12_ARATH</name>